<dbReference type="EC" id="4.1.2.4" evidence="1"/>
<dbReference type="EMBL" id="AE017221">
    <property type="protein sequence ID" value="AAS81169.1"/>
    <property type="molecule type" value="Genomic_DNA"/>
</dbReference>
<dbReference type="RefSeq" id="WP_011173254.1">
    <property type="nucleotide sequence ID" value="NC_005835.1"/>
</dbReference>
<dbReference type="SMR" id="Q72JE9"/>
<dbReference type="KEGG" id="tth:TT_C0823"/>
<dbReference type="eggNOG" id="COG0274">
    <property type="taxonomic scope" value="Bacteria"/>
</dbReference>
<dbReference type="HOGENOM" id="CLU_053595_0_1_0"/>
<dbReference type="OrthoDB" id="9778711at2"/>
<dbReference type="UniPathway" id="UPA00002">
    <property type="reaction ID" value="UER00468"/>
</dbReference>
<dbReference type="Proteomes" id="UP000000592">
    <property type="component" value="Chromosome"/>
</dbReference>
<dbReference type="GO" id="GO:0005737">
    <property type="term" value="C:cytoplasm"/>
    <property type="evidence" value="ECO:0007669"/>
    <property type="project" value="UniProtKB-SubCell"/>
</dbReference>
<dbReference type="GO" id="GO:0004139">
    <property type="term" value="F:deoxyribose-phosphate aldolase activity"/>
    <property type="evidence" value="ECO:0007669"/>
    <property type="project" value="UniProtKB-UniRule"/>
</dbReference>
<dbReference type="GO" id="GO:0006018">
    <property type="term" value="P:2-deoxyribose 1-phosphate catabolic process"/>
    <property type="evidence" value="ECO:0007669"/>
    <property type="project" value="UniProtKB-UniRule"/>
</dbReference>
<dbReference type="GO" id="GO:0016052">
    <property type="term" value="P:carbohydrate catabolic process"/>
    <property type="evidence" value="ECO:0007669"/>
    <property type="project" value="TreeGrafter"/>
</dbReference>
<dbReference type="GO" id="GO:0009264">
    <property type="term" value="P:deoxyribonucleotide catabolic process"/>
    <property type="evidence" value="ECO:0007669"/>
    <property type="project" value="InterPro"/>
</dbReference>
<dbReference type="CDD" id="cd00959">
    <property type="entry name" value="DeoC"/>
    <property type="match status" value="1"/>
</dbReference>
<dbReference type="FunFam" id="3.20.20.70:FF:000044">
    <property type="entry name" value="Deoxyribose-phosphate aldolase"/>
    <property type="match status" value="1"/>
</dbReference>
<dbReference type="Gene3D" id="3.20.20.70">
    <property type="entry name" value="Aldolase class I"/>
    <property type="match status" value="1"/>
</dbReference>
<dbReference type="HAMAP" id="MF_00114">
    <property type="entry name" value="DeoC_type1"/>
    <property type="match status" value="1"/>
</dbReference>
<dbReference type="InterPro" id="IPR013785">
    <property type="entry name" value="Aldolase_TIM"/>
</dbReference>
<dbReference type="InterPro" id="IPR011343">
    <property type="entry name" value="DeoC"/>
</dbReference>
<dbReference type="InterPro" id="IPR002915">
    <property type="entry name" value="DeoC/FbaB/LacD_aldolase"/>
</dbReference>
<dbReference type="InterPro" id="IPR028581">
    <property type="entry name" value="DeoC_typeI"/>
</dbReference>
<dbReference type="NCBIfam" id="TIGR00126">
    <property type="entry name" value="deoC"/>
    <property type="match status" value="1"/>
</dbReference>
<dbReference type="PANTHER" id="PTHR10889">
    <property type="entry name" value="DEOXYRIBOSE-PHOSPHATE ALDOLASE"/>
    <property type="match status" value="1"/>
</dbReference>
<dbReference type="PANTHER" id="PTHR10889:SF1">
    <property type="entry name" value="DEOXYRIBOSE-PHOSPHATE ALDOLASE"/>
    <property type="match status" value="1"/>
</dbReference>
<dbReference type="Pfam" id="PF01791">
    <property type="entry name" value="DeoC"/>
    <property type="match status" value="1"/>
</dbReference>
<dbReference type="PIRSF" id="PIRSF001357">
    <property type="entry name" value="DeoC"/>
    <property type="match status" value="1"/>
</dbReference>
<dbReference type="SMART" id="SM01133">
    <property type="entry name" value="DeoC"/>
    <property type="match status" value="1"/>
</dbReference>
<dbReference type="SUPFAM" id="SSF51569">
    <property type="entry name" value="Aldolase"/>
    <property type="match status" value="1"/>
</dbReference>
<keyword id="KW-0963">Cytoplasm</keyword>
<keyword id="KW-0456">Lyase</keyword>
<keyword id="KW-0704">Schiff base</keyword>
<accession>Q72JE9</accession>
<sequence>MDLAAHIDHTLLKPTATPEEVAKAAEEALEYGFYGLCIPPSYVAWVKARYPHAPFRLVTVVGFPLGYQEKEVKALEAALACARGADEVDMVLHLGRAKAGDLDYVEAEVRAVREAVPKAVLKVILETGYFSPEEIARLAEAAIRGGADFLKTSTGFGPRGASLEDVALLVRVAQGRAQVKAAGGIRDRETALRMLKAGASRLGTSSGVALVAGEGGTLGY</sequence>
<organism>
    <name type="scientific">Thermus thermophilus (strain ATCC BAA-163 / DSM 7039 / HB27)</name>
    <dbReference type="NCBI Taxonomy" id="262724"/>
    <lineage>
        <taxon>Bacteria</taxon>
        <taxon>Thermotogati</taxon>
        <taxon>Deinococcota</taxon>
        <taxon>Deinococci</taxon>
        <taxon>Thermales</taxon>
        <taxon>Thermaceae</taxon>
        <taxon>Thermus</taxon>
    </lineage>
</organism>
<comment type="function">
    <text evidence="1">Catalyzes a reversible aldol reaction between acetaldehyde and D-glyceraldehyde 3-phosphate to generate 2-deoxy-D-ribose 5-phosphate.</text>
</comment>
<comment type="catalytic activity">
    <reaction evidence="1">
        <text>2-deoxy-D-ribose 5-phosphate = D-glyceraldehyde 3-phosphate + acetaldehyde</text>
        <dbReference type="Rhea" id="RHEA:12821"/>
        <dbReference type="ChEBI" id="CHEBI:15343"/>
        <dbReference type="ChEBI" id="CHEBI:59776"/>
        <dbReference type="ChEBI" id="CHEBI:62877"/>
        <dbReference type="EC" id="4.1.2.4"/>
    </reaction>
</comment>
<comment type="pathway">
    <text evidence="1">Carbohydrate degradation; 2-deoxy-D-ribose 1-phosphate degradation; D-glyceraldehyde 3-phosphate and acetaldehyde from 2-deoxy-alpha-D-ribose 1-phosphate: step 2/2.</text>
</comment>
<comment type="subcellular location">
    <subcellularLocation>
        <location evidence="1">Cytoplasm</location>
    </subcellularLocation>
</comment>
<comment type="similarity">
    <text evidence="1">Belongs to the DeoC/FbaB aldolase family. DeoC type 1 subfamily.</text>
</comment>
<protein>
    <recommendedName>
        <fullName evidence="1">Deoxyribose-phosphate aldolase</fullName>
        <shortName evidence="1">DERA</shortName>
        <ecNumber evidence="1">4.1.2.4</ecNumber>
    </recommendedName>
    <alternativeName>
        <fullName evidence="1">2-deoxy-D-ribose 5-phosphate aldolase</fullName>
    </alternativeName>
    <alternativeName>
        <fullName evidence="1">Phosphodeoxyriboaldolase</fullName>
        <shortName evidence="1">Deoxyriboaldolase</shortName>
    </alternativeName>
</protein>
<reference key="1">
    <citation type="journal article" date="2004" name="Nat. Biotechnol.">
        <title>The genome sequence of the extreme thermophile Thermus thermophilus.</title>
        <authorList>
            <person name="Henne A."/>
            <person name="Brueggemann H."/>
            <person name="Raasch C."/>
            <person name="Wiezer A."/>
            <person name="Hartsch T."/>
            <person name="Liesegang H."/>
            <person name="Johann A."/>
            <person name="Lienard T."/>
            <person name="Gohl O."/>
            <person name="Martinez-Arias R."/>
            <person name="Jacobi C."/>
            <person name="Starkuviene V."/>
            <person name="Schlenczeck S."/>
            <person name="Dencker S."/>
            <person name="Huber R."/>
            <person name="Klenk H.-P."/>
            <person name="Kramer W."/>
            <person name="Merkl R."/>
            <person name="Gottschalk G."/>
            <person name="Fritz H.-J."/>
        </authorList>
    </citation>
    <scope>NUCLEOTIDE SEQUENCE [LARGE SCALE GENOMIC DNA]</scope>
    <source>
        <strain>ATCC BAA-163 / DSM 7039 / HB27</strain>
    </source>
</reference>
<feature type="chain" id="PRO_0000231571" description="Deoxyribose-phosphate aldolase">
    <location>
        <begin position="1"/>
        <end position="220"/>
    </location>
</feature>
<feature type="active site" description="Proton donor/acceptor" evidence="1">
    <location>
        <position position="89"/>
    </location>
</feature>
<feature type="active site" description="Schiff-base intermediate with acetaldehyde" evidence="1">
    <location>
        <position position="151"/>
    </location>
</feature>
<feature type="active site" description="Proton donor/acceptor" evidence="1">
    <location>
        <position position="180"/>
    </location>
</feature>
<proteinExistence type="inferred from homology"/>
<name>DEOC_THET2</name>
<gene>
    <name evidence="1" type="primary">deoC</name>
    <name type="ordered locus">TT_C0823</name>
</gene>
<evidence type="ECO:0000255" key="1">
    <source>
        <dbReference type="HAMAP-Rule" id="MF_00114"/>
    </source>
</evidence>